<feature type="signal peptide" evidence="2">
    <location>
        <begin position="1"/>
        <end position="19"/>
    </location>
</feature>
<feature type="propeptide" id="PRO_0000444786" evidence="5">
    <location>
        <begin position="20"/>
        <end position="49"/>
    </location>
</feature>
<feature type="peptide" id="PRO_5014384741" description="Conotoxin reg3.16" evidence="5">
    <location>
        <begin position="50"/>
        <end position="64"/>
    </location>
</feature>
<feature type="disulfide bond" evidence="1">
    <location>
        <begin position="50"/>
        <end position="64"/>
    </location>
</feature>
<feature type="disulfide bond" evidence="1">
    <location>
        <begin position="51"/>
        <end position="60"/>
    </location>
</feature>
<feature type="disulfide bond" evidence="1">
    <location>
        <begin position="56"/>
        <end position="63"/>
    </location>
</feature>
<comment type="subcellular location">
    <subcellularLocation>
        <location evidence="5">Secreted</location>
    </subcellularLocation>
</comment>
<comment type="tissue specificity">
    <text evidence="5">Expressed by the venom duct.</text>
</comment>
<comment type="domain">
    <text evidence="4">The cysteine framework is III (CC-C-C-CC). Classified in the M-2 branch, since 2 residues stand between the fourth and the fifth cysteine residues.</text>
</comment>
<comment type="similarity">
    <text evidence="4">Belongs to the conotoxin M superfamily.</text>
</comment>
<dbReference type="EMBL" id="MF588950">
    <property type="protein sequence ID" value="AUJ88074.1"/>
    <property type="molecule type" value="mRNA"/>
</dbReference>
<dbReference type="GO" id="GO:0005576">
    <property type="term" value="C:extracellular region"/>
    <property type="evidence" value="ECO:0007669"/>
    <property type="project" value="UniProtKB-SubCell"/>
</dbReference>
<dbReference type="GO" id="GO:0008200">
    <property type="term" value="F:ion channel inhibitor activity"/>
    <property type="evidence" value="ECO:0007669"/>
    <property type="project" value="InterPro"/>
</dbReference>
<dbReference type="GO" id="GO:0090729">
    <property type="term" value="F:toxin activity"/>
    <property type="evidence" value="ECO:0007669"/>
    <property type="project" value="UniProtKB-KW"/>
</dbReference>
<dbReference type="InterPro" id="IPR004214">
    <property type="entry name" value="Conotoxin"/>
</dbReference>
<dbReference type="Pfam" id="PF02950">
    <property type="entry name" value="Conotoxin"/>
    <property type="match status" value="1"/>
</dbReference>
<keyword id="KW-1015">Disulfide bond</keyword>
<keyword id="KW-0964">Secreted</keyword>
<keyword id="KW-0732">Signal</keyword>
<keyword id="KW-0800">Toxin</keyword>
<accession>A0A2I6EDN2</accession>
<evidence type="ECO:0000250" key="1">
    <source>
        <dbReference type="UniProtKB" id="P85021"/>
    </source>
</evidence>
<evidence type="ECO:0000255" key="2"/>
<evidence type="ECO:0000303" key="3">
    <source>
    </source>
</evidence>
<evidence type="ECO:0000305" key="4"/>
<evidence type="ECO:0000305" key="5">
    <source>
    </source>
</evidence>
<evidence type="ECO:0000312" key="6">
    <source>
        <dbReference type="EMBL" id="AUJ88074.1"/>
    </source>
</evidence>
<name>CM316_CONRE</name>
<sequence>MSKLGVFLTICLLLFPLTALQLDGDQPADKPAQRKLKILPKRKHWTRFTCCYEEECPPSCKLCC</sequence>
<organism>
    <name type="scientific">Conus regius</name>
    <name type="common">Crown cone</name>
    <dbReference type="NCBI Taxonomy" id="101314"/>
    <lineage>
        <taxon>Eukaryota</taxon>
        <taxon>Metazoa</taxon>
        <taxon>Spiralia</taxon>
        <taxon>Lophotrochozoa</taxon>
        <taxon>Mollusca</taxon>
        <taxon>Gastropoda</taxon>
        <taxon>Caenogastropoda</taxon>
        <taxon>Neogastropoda</taxon>
        <taxon>Conoidea</taxon>
        <taxon>Conidae</taxon>
        <taxon>Conus</taxon>
        <taxon>Stephanoconus</taxon>
    </lineage>
</organism>
<reference key="1">
    <citation type="journal article" date="2017" name="FEBS J.">
        <title>Structural plasticity of Mini-M conotoxins: expression of all mini-M subtypes by Conus regius.</title>
        <authorList>
            <person name="Franco A."/>
            <person name="Dovell S."/>
            <person name="Moller C."/>
            <person name="Grandal M."/>
            <person name="Clark E."/>
            <person name="Mari F."/>
        </authorList>
    </citation>
    <scope>NUCLEOTIDE SEQUENCE [MRNA]</scope>
    <source>
        <tissue>Venom duct</tissue>
    </source>
</reference>
<protein>
    <recommendedName>
        <fullName evidence="3">Conotoxin reg3.16</fullName>
        <shortName evidence="6">Rg3.16</shortName>
    </recommendedName>
</protein>
<proteinExistence type="inferred from homology"/>